<feature type="chain" id="PRO_0000387708" description="Acetaldehyde dehydrogenase 2">
    <location>
        <begin position="1"/>
        <end position="314"/>
    </location>
</feature>
<feature type="active site" description="Acyl-thioester intermediate" evidence="1">
    <location>
        <position position="133"/>
    </location>
</feature>
<feature type="binding site" evidence="1">
    <location>
        <begin position="15"/>
        <end position="18"/>
    </location>
    <ligand>
        <name>NAD(+)</name>
        <dbReference type="ChEBI" id="CHEBI:57540"/>
    </ligand>
</feature>
<feature type="binding site" evidence="1">
    <location>
        <begin position="164"/>
        <end position="172"/>
    </location>
    <ligand>
        <name>NAD(+)</name>
        <dbReference type="ChEBI" id="CHEBI:57540"/>
    </ligand>
</feature>
<feature type="binding site" evidence="1">
    <location>
        <position position="291"/>
    </location>
    <ligand>
        <name>NAD(+)</name>
        <dbReference type="ChEBI" id="CHEBI:57540"/>
    </ligand>
</feature>
<evidence type="ECO:0000255" key="1">
    <source>
        <dbReference type="HAMAP-Rule" id="MF_01657"/>
    </source>
</evidence>
<reference key="1">
    <citation type="submission" date="2007-05" db="EMBL/GenBank/DDBJ databases">
        <title>Complete sequence of Pseudomonas putida F1.</title>
        <authorList>
            <consortium name="US DOE Joint Genome Institute"/>
            <person name="Copeland A."/>
            <person name="Lucas S."/>
            <person name="Lapidus A."/>
            <person name="Barry K."/>
            <person name="Detter J.C."/>
            <person name="Glavina del Rio T."/>
            <person name="Hammon N."/>
            <person name="Israni S."/>
            <person name="Dalin E."/>
            <person name="Tice H."/>
            <person name="Pitluck S."/>
            <person name="Chain P."/>
            <person name="Malfatti S."/>
            <person name="Shin M."/>
            <person name="Vergez L."/>
            <person name="Schmutz J."/>
            <person name="Larimer F."/>
            <person name="Land M."/>
            <person name="Hauser L."/>
            <person name="Kyrpides N."/>
            <person name="Lykidis A."/>
            <person name="Parales R."/>
            <person name="Richardson P."/>
        </authorList>
    </citation>
    <scope>NUCLEOTIDE SEQUENCE [LARGE SCALE GENOMIC DNA]</scope>
    <source>
        <strain>ATCC 700007 / DSM 6899 / JCM 31910 / BCRC 17059 / LMG 24140 / F1</strain>
    </source>
</reference>
<name>ACDH2_PSEP1</name>
<comment type="catalytic activity">
    <reaction evidence="1">
        <text>acetaldehyde + NAD(+) + CoA = acetyl-CoA + NADH + H(+)</text>
        <dbReference type="Rhea" id="RHEA:23288"/>
        <dbReference type="ChEBI" id="CHEBI:15343"/>
        <dbReference type="ChEBI" id="CHEBI:15378"/>
        <dbReference type="ChEBI" id="CHEBI:57287"/>
        <dbReference type="ChEBI" id="CHEBI:57288"/>
        <dbReference type="ChEBI" id="CHEBI:57540"/>
        <dbReference type="ChEBI" id="CHEBI:57945"/>
        <dbReference type="EC" id="1.2.1.10"/>
    </reaction>
</comment>
<comment type="similarity">
    <text evidence="1">Belongs to the acetaldehyde dehydrogenase family.</text>
</comment>
<accession>A5W4F9</accession>
<proteinExistence type="inferred from homology"/>
<organism>
    <name type="scientific">Pseudomonas putida (strain ATCC 700007 / DSM 6899 / JCM 31910 / BCRC 17059 / LMG 24140 / F1)</name>
    <dbReference type="NCBI Taxonomy" id="351746"/>
    <lineage>
        <taxon>Bacteria</taxon>
        <taxon>Pseudomonadati</taxon>
        <taxon>Pseudomonadota</taxon>
        <taxon>Gammaproteobacteria</taxon>
        <taxon>Pseudomonadales</taxon>
        <taxon>Pseudomonadaceae</taxon>
        <taxon>Pseudomonas</taxon>
    </lineage>
</organism>
<dbReference type="EC" id="1.2.1.10" evidence="1"/>
<dbReference type="EMBL" id="CP000712">
    <property type="protein sequence ID" value="ABQ79019.1"/>
    <property type="molecule type" value="Genomic_DNA"/>
</dbReference>
<dbReference type="SMR" id="A5W4F9"/>
<dbReference type="KEGG" id="ppf:Pput_2889"/>
<dbReference type="eggNOG" id="COG4569">
    <property type="taxonomic scope" value="Bacteria"/>
</dbReference>
<dbReference type="HOGENOM" id="CLU_062208_0_0_6"/>
<dbReference type="GO" id="GO:0008774">
    <property type="term" value="F:acetaldehyde dehydrogenase (acetylating) activity"/>
    <property type="evidence" value="ECO:0007669"/>
    <property type="project" value="UniProtKB-UniRule"/>
</dbReference>
<dbReference type="GO" id="GO:0051287">
    <property type="term" value="F:NAD binding"/>
    <property type="evidence" value="ECO:0007669"/>
    <property type="project" value="UniProtKB-UniRule"/>
</dbReference>
<dbReference type="GO" id="GO:0009056">
    <property type="term" value="P:catabolic process"/>
    <property type="evidence" value="ECO:0007669"/>
    <property type="project" value="UniProtKB-KW"/>
</dbReference>
<dbReference type="CDD" id="cd23933">
    <property type="entry name" value="ALDH_C"/>
    <property type="match status" value="1"/>
</dbReference>
<dbReference type="Gene3D" id="3.30.360.10">
    <property type="entry name" value="Dihydrodipicolinate Reductase, domain 2"/>
    <property type="match status" value="1"/>
</dbReference>
<dbReference type="Gene3D" id="3.40.50.720">
    <property type="entry name" value="NAD(P)-binding Rossmann-like Domain"/>
    <property type="match status" value="1"/>
</dbReference>
<dbReference type="HAMAP" id="MF_01657">
    <property type="entry name" value="Ac_ald_DH_ac"/>
    <property type="match status" value="1"/>
</dbReference>
<dbReference type="InterPro" id="IPR003361">
    <property type="entry name" value="Acetaldehyde_dehydrogenase"/>
</dbReference>
<dbReference type="InterPro" id="IPR015426">
    <property type="entry name" value="Acetylaldehyde_DH_C"/>
</dbReference>
<dbReference type="InterPro" id="IPR036291">
    <property type="entry name" value="NAD(P)-bd_dom_sf"/>
</dbReference>
<dbReference type="InterPro" id="IPR000534">
    <property type="entry name" value="Semialdehyde_DH_NAD-bd"/>
</dbReference>
<dbReference type="NCBIfam" id="TIGR03215">
    <property type="entry name" value="ac_ald_DH_ac"/>
    <property type="match status" value="1"/>
</dbReference>
<dbReference type="NCBIfam" id="NF006157">
    <property type="entry name" value="PRK08300.1"/>
    <property type="match status" value="1"/>
</dbReference>
<dbReference type="Pfam" id="PF09290">
    <property type="entry name" value="AcetDehyd-dimer"/>
    <property type="match status" value="1"/>
</dbReference>
<dbReference type="Pfam" id="PF01118">
    <property type="entry name" value="Semialdhyde_dh"/>
    <property type="match status" value="1"/>
</dbReference>
<dbReference type="PIRSF" id="PIRSF015689">
    <property type="entry name" value="Actaldh_dh_actl"/>
    <property type="match status" value="1"/>
</dbReference>
<dbReference type="SMART" id="SM00859">
    <property type="entry name" value="Semialdhyde_dh"/>
    <property type="match status" value="1"/>
</dbReference>
<dbReference type="SUPFAM" id="SSF55347">
    <property type="entry name" value="Glyceraldehyde-3-phosphate dehydrogenase-like, C-terminal domain"/>
    <property type="match status" value="1"/>
</dbReference>
<dbReference type="SUPFAM" id="SSF51735">
    <property type="entry name" value="NAD(P)-binding Rossmann-fold domains"/>
    <property type="match status" value="1"/>
</dbReference>
<sequence length="314" mass="33141">MQTHDGKTAVAIIGSGNIGTDLMVKILRHGKHLRMGAFVGIDPESDGLKRAERMGVPTVSTGIEGLLSHPDFGSIGFVFDATSAGAHARHEQLLRPHGVRVIDLTPAAIGPFVVPAVNIEQHLDAPNVNMVTCGGQATIPMVAAVSRVVPVEYAEIVASISSRSAGPGTRANIDEFTETTSNAIVRVGGAQRGKAIIILNPAEPPLIMRDTVYCLVPGHADRQAIVESVERMASAVAAYVPGYRLKQTVQFDEFKGRMPQETGSAQAPRLKVSVFLEVEGAGHYLPSYAGNLDIMTSAALATAERIAARQPVAA</sequence>
<gene>
    <name type="ordered locus">Pput_2889</name>
</gene>
<protein>
    <recommendedName>
        <fullName evidence="1">Acetaldehyde dehydrogenase 2</fullName>
        <ecNumber evidence="1">1.2.1.10</ecNumber>
    </recommendedName>
    <alternativeName>
        <fullName evidence="1">Acetaldehyde dehydrogenase [acetylating] 2</fullName>
    </alternativeName>
</protein>
<keyword id="KW-0058">Aromatic hydrocarbons catabolism</keyword>
<keyword id="KW-0520">NAD</keyword>
<keyword id="KW-0560">Oxidoreductase</keyword>